<evidence type="ECO:0000255" key="1">
    <source>
        <dbReference type="HAMAP-Rule" id="MF_01390"/>
    </source>
</evidence>
<organism>
    <name type="scientific">Maihuenia poeppigii</name>
    <name type="common">Hardy cactus</name>
    <name type="synonym">Opuntia poeppigii</name>
    <dbReference type="NCBI Taxonomy" id="106974"/>
    <lineage>
        <taxon>Eukaryota</taxon>
        <taxon>Viridiplantae</taxon>
        <taxon>Streptophyta</taxon>
        <taxon>Embryophyta</taxon>
        <taxon>Tracheophyta</taxon>
        <taxon>Spermatophyta</taxon>
        <taxon>Magnoliopsida</taxon>
        <taxon>eudicotyledons</taxon>
        <taxon>Gunneridae</taxon>
        <taxon>Pentapetalae</taxon>
        <taxon>Caryophyllales</taxon>
        <taxon>Cactineae</taxon>
        <taxon>Cactaceae</taxon>
        <taxon>Maihuenioideae</taxon>
        <taxon>Maihuenia</taxon>
    </lineage>
</organism>
<reference key="1">
    <citation type="journal article" date="2002" name="Am. J. Bot.">
        <title>Phylogenetic relationships in the cactus family (Cactaceae) based on evidence from trnK/matK and trnL-trnF sequences.</title>
        <authorList>
            <person name="Nyffeler R."/>
        </authorList>
        <dbReference type="AGRICOLA" id="IND23311510"/>
    </citation>
    <scope>NUCLEOTIDE SEQUENCE [GENOMIC DNA]</scope>
</reference>
<accession>Q95ED6</accession>
<sequence length="511" mass="61173">MEEFQRYIELDRSWQYNFFYPLIFQEYIYGFAYDHGLNKSILLENAGDKKYSLLIVKRLITRMYQQNHLSLSANHSNQNDFFGHKHKKNLYYQIISEGFAVIVEIPFSLLLISYLEAKEKKIVKSHNLQSIHSIFPFFEDKFLHLNFLLEILIPYPIHLEILVQTLRYWVKDASSLHLLRFFLYEYRNWNSLITPQKSISFFSKRNQRLFLFLYNFYVCEYESIFLFLCNQSSHLRSTSFGALLERIYFYGKLEYLVKVKTFTNTQDFRVILWLFKDPFLHYVRYRGKSILASKGTSLLMHKWKYYLINFWQCHFSLWSQPRRIYINRLSKHSLDFMGFFSSVRLNSSVVRSQMVENSFLIDNPIKKFDTIVRIIPLVGSLAKAKFCTVLGHPISKSVWTDLLDSDIIDRFGRICRNLSHYYSGSSRKKSLYRIKYILRLSCARTLARKHKSTVRAFLKRLGSEFLEEFFTEEEKVLSLILPRDSSISRGLYRGPFWYLDIICIHDLANYE</sequence>
<gene>
    <name evidence="1" type="primary">matK</name>
</gene>
<proteinExistence type="inferred from homology"/>
<protein>
    <recommendedName>
        <fullName evidence="1">Maturase K</fullName>
    </recommendedName>
    <alternativeName>
        <fullName evidence="1">Intron maturase</fullName>
    </alternativeName>
</protein>
<feature type="chain" id="PRO_0000143502" description="Maturase K">
    <location>
        <begin position="1"/>
        <end position="511"/>
    </location>
</feature>
<name>MATK_MAIPO</name>
<geneLocation type="chloroplast"/>
<keyword id="KW-0150">Chloroplast</keyword>
<keyword id="KW-0507">mRNA processing</keyword>
<keyword id="KW-0934">Plastid</keyword>
<keyword id="KW-0694">RNA-binding</keyword>
<keyword id="KW-0819">tRNA processing</keyword>
<dbReference type="EMBL" id="AY015282">
    <property type="protein sequence ID" value="AAK19769.1"/>
    <property type="molecule type" value="Genomic_DNA"/>
</dbReference>
<dbReference type="GO" id="GO:0009507">
    <property type="term" value="C:chloroplast"/>
    <property type="evidence" value="ECO:0007669"/>
    <property type="project" value="UniProtKB-SubCell"/>
</dbReference>
<dbReference type="GO" id="GO:0003723">
    <property type="term" value="F:RNA binding"/>
    <property type="evidence" value="ECO:0007669"/>
    <property type="project" value="UniProtKB-KW"/>
</dbReference>
<dbReference type="GO" id="GO:0006397">
    <property type="term" value="P:mRNA processing"/>
    <property type="evidence" value="ECO:0007669"/>
    <property type="project" value="UniProtKB-KW"/>
</dbReference>
<dbReference type="GO" id="GO:0008380">
    <property type="term" value="P:RNA splicing"/>
    <property type="evidence" value="ECO:0007669"/>
    <property type="project" value="UniProtKB-UniRule"/>
</dbReference>
<dbReference type="GO" id="GO:0008033">
    <property type="term" value="P:tRNA processing"/>
    <property type="evidence" value="ECO:0007669"/>
    <property type="project" value="UniProtKB-KW"/>
</dbReference>
<dbReference type="HAMAP" id="MF_01390">
    <property type="entry name" value="MatK"/>
    <property type="match status" value="1"/>
</dbReference>
<dbReference type="InterPro" id="IPR024937">
    <property type="entry name" value="Domain_X"/>
</dbReference>
<dbReference type="InterPro" id="IPR002866">
    <property type="entry name" value="Maturase_MatK"/>
</dbReference>
<dbReference type="InterPro" id="IPR024942">
    <property type="entry name" value="Maturase_MatK_N"/>
</dbReference>
<dbReference type="PANTHER" id="PTHR34811">
    <property type="entry name" value="MATURASE K"/>
    <property type="match status" value="1"/>
</dbReference>
<dbReference type="PANTHER" id="PTHR34811:SF1">
    <property type="entry name" value="MATURASE K"/>
    <property type="match status" value="1"/>
</dbReference>
<dbReference type="Pfam" id="PF01348">
    <property type="entry name" value="Intron_maturas2"/>
    <property type="match status" value="1"/>
</dbReference>
<dbReference type="Pfam" id="PF01824">
    <property type="entry name" value="MatK_N"/>
    <property type="match status" value="1"/>
</dbReference>
<comment type="function">
    <text evidence="1">Usually encoded in the trnK tRNA gene intron. Probably assists in splicing its own and other chloroplast group II introns.</text>
</comment>
<comment type="subcellular location">
    <subcellularLocation>
        <location>Plastid</location>
        <location>Chloroplast</location>
    </subcellularLocation>
</comment>
<comment type="similarity">
    <text evidence="1">Belongs to the intron maturase 2 family. MatK subfamily.</text>
</comment>